<keyword id="KW-0275">Fatty acid biosynthesis</keyword>
<keyword id="KW-0276">Fatty acid metabolism</keyword>
<keyword id="KW-0444">Lipid biosynthesis</keyword>
<keyword id="KW-0443">Lipid metabolism</keyword>
<keyword id="KW-0520">NAD</keyword>
<keyword id="KW-0560">Oxidoreductase</keyword>
<protein>
    <recommendedName>
        <fullName evidence="1">Enoyl-[acyl-carrier-protein] reductase [NADH]</fullName>
        <shortName evidence="1">ENR</shortName>
        <ecNumber evidence="1">1.3.1.9</ecNumber>
    </recommendedName>
</protein>
<accession>A9KD01</accession>
<comment type="function">
    <text evidence="1">Involved in the final reduction of the elongation cycle of fatty acid synthesis (FAS II). Catalyzes the reduction of a carbon-carbon double bond in an enoyl moiety that is covalently linked to an acyl carrier protein (ACP).</text>
</comment>
<comment type="catalytic activity">
    <reaction evidence="1">
        <text>a 2,3-saturated acyl-[ACP] + NAD(+) = a (2E)-enoyl-[ACP] + NADH + H(+)</text>
        <dbReference type="Rhea" id="RHEA:10240"/>
        <dbReference type="Rhea" id="RHEA-COMP:9925"/>
        <dbReference type="Rhea" id="RHEA-COMP:9926"/>
        <dbReference type="ChEBI" id="CHEBI:15378"/>
        <dbReference type="ChEBI" id="CHEBI:57540"/>
        <dbReference type="ChEBI" id="CHEBI:57945"/>
        <dbReference type="ChEBI" id="CHEBI:78784"/>
        <dbReference type="ChEBI" id="CHEBI:78785"/>
        <dbReference type="EC" id="1.3.1.9"/>
    </reaction>
</comment>
<comment type="pathway">
    <text evidence="1">Lipid metabolism; fatty acid biosynthesis.</text>
</comment>
<comment type="subunit">
    <text evidence="1">Monomer.</text>
</comment>
<comment type="similarity">
    <text evidence="1">Belongs to the TER reductase family.</text>
</comment>
<dbReference type="EC" id="1.3.1.9" evidence="1"/>
<dbReference type="EMBL" id="CP000733">
    <property type="protein sequence ID" value="ABS76978.1"/>
    <property type="molecule type" value="Genomic_DNA"/>
</dbReference>
<dbReference type="RefSeq" id="WP_011997285.1">
    <property type="nucleotide sequence ID" value="NC_009727.1"/>
</dbReference>
<dbReference type="SMR" id="A9KD01"/>
<dbReference type="KEGG" id="cbd:CBUD_1824"/>
<dbReference type="HOGENOM" id="CLU_057698_1_0_6"/>
<dbReference type="UniPathway" id="UPA00094"/>
<dbReference type="Proteomes" id="UP000008555">
    <property type="component" value="Chromosome"/>
</dbReference>
<dbReference type="GO" id="GO:0004318">
    <property type="term" value="F:enoyl-[acyl-carrier-protein] reductase (NADH) activity"/>
    <property type="evidence" value="ECO:0007669"/>
    <property type="project" value="UniProtKB-UniRule"/>
</dbReference>
<dbReference type="GO" id="GO:0051287">
    <property type="term" value="F:NAD binding"/>
    <property type="evidence" value="ECO:0007669"/>
    <property type="project" value="UniProtKB-UniRule"/>
</dbReference>
<dbReference type="GO" id="GO:0050343">
    <property type="term" value="F:trans-2-enoyl-CoA reductase (NADH) activity"/>
    <property type="evidence" value="ECO:0007669"/>
    <property type="project" value="TreeGrafter"/>
</dbReference>
<dbReference type="GO" id="GO:0006633">
    <property type="term" value="P:fatty acid biosynthetic process"/>
    <property type="evidence" value="ECO:0007669"/>
    <property type="project" value="UniProtKB-UniRule"/>
</dbReference>
<dbReference type="FunFam" id="3.40.50.720:FF:000221">
    <property type="entry name" value="Enoyl-[acyl-carrier-protein] reductase [NADH]"/>
    <property type="match status" value="1"/>
</dbReference>
<dbReference type="Gene3D" id="3.40.50.720">
    <property type="entry name" value="NAD(P)-binding Rossmann-like Domain"/>
    <property type="match status" value="1"/>
</dbReference>
<dbReference type="HAMAP" id="MF_01838">
    <property type="entry name" value="FabV_reductase"/>
    <property type="match status" value="1"/>
</dbReference>
<dbReference type="InterPro" id="IPR024906">
    <property type="entry name" value="Eno_Rdtase_FAD-bd_dom"/>
</dbReference>
<dbReference type="InterPro" id="IPR024910">
    <property type="entry name" value="Enoyl-CoA_Rdtase_cat_dom"/>
</dbReference>
<dbReference type="InterPro" id="IPR050048">
    <property type="entry name" value="FabV-like_NADH_b"/>
</dbReference>
<dbReference type="InterPro" id="IPR010758">
    <property type="entry name" value="Trans-2-enoyl-CoA_reductase"/>
</dbReference>
<dbReference type="NCBIfam" id="NF043048">
    <property type="entry name" value="EnoyACPredFabV"/>
    <property type="match status" value="1"/>
</dbReference>
<dbReference type="NCBIfam" id="NF010177">
    <property type="entry name" value="PRK13656.1"/>
    <property type="match status" value="1"/>
</dbReference>
<dbReference type="PANTHER" id="PTHR37480">
    <property type="entry name" value="ENOYL-[ACYL-CARRIER-PROTEIN] REDUCTASE [NADH]"/>
    <property type="match status" value="1"/>
</dbReference>
<dbReference type="PANTHER" id="PTHR37480:SF1">
    <property type="entry name" value="ENOYL-[ACYL-CARRIER-PROTEIN] REDUCTASE [NADH]"/>
    <property type="match status" value="1"/>
</dbReference>
<dbReference type="Pfam" id="PF07055">
    <property type="entry name" value="Eno-Rase_FAD_bd"/>
    <property type="match status" value="1"/>
</dbReference>
<dbReference type="Pfam" id="PF12242">
    <property type="entry name" value="Eno-Rase_NADH_b"/>
    <property type="match status" value="1"/>
</dbReference>
<dbReference type="Pfam" id="PF12241">
    <property type="entry name" value="Enoyl_reductase"/>
    <property type="match status" value="1"/>
</dbReference>
<evidence type="ECO:0000255" key="1">
    <source>
        <dbReference type="HAMAP-Rule" id="MF_01838"/>
    </source>
</evidence>
<gene>
    <name evidence="1" type="primary">fabV</name>
    <name type="ordered locus">CBUD_1824</name>
</gene>
<reference key="1">
    <citation type="journal article" date="2009" name="Infect. Immun.">
        <title>Comparative genomics reveal extensive transposon-mediated genomic plasticity and diversity among potential effector proteins within the genus Coxiella.</title>
        <authorList>
            <person name="Beare P.A."/>
            <person name="Unsworth N."/>
            <person name="Andoh M."/>
            <person name="Voth D.E."/>
            <person name="Omsland A."/>
            <person name="Gilk S.D."/>
            <person name="Williams K.P."/>
            <person name="Sobral B.W."/>
            <person name="Kupko J.J. III"/>
            <person name="Porcella S.F."/>
            <person name="Samuel J.E."/>
            <person name="Heinzen R.A."/>
        </authorList>
    </citation>
    <scope>NUCLEOTIDE SEQUENCE [LARGE SCALE GENOMIC DNA]</scope>
    <source>
        <strain>Dugway 5J108-111</strain>
    </source>
</reference>
<organism>
    <name type="scientific">Coxiella burnetii (strain Dugway 5J108-111)</name>
    <dbReference type="NCBI Taxonomy" id="434922"/>
    <lineage>
        <taxon>Bacteria</taxon>
        <taxon>Pseudomonadati</taxon>
        <taxon>Pseudomonadota</taxon>
        <taxon>Gammaproteobacteria</taxon>
        <taxon>Legionellales</taxon>
        <taxon>Coxiellaceae</taxon>
        <taxon>Coxiella</taxon>
    </lineage>
</organism>
<sequence length="406" mass="44861">MIVQPKVRGFICTTAHPEGCARHVGEWINYAKQQPSLTGGPQKVLIIGASTGFGLASRIVAAFGAGAKTIGVFFERPASGKRTASPGWYNTAAFEKTALAAGLYAKSISGDAFSDEIKQQTIDLIQKDWQGGVDLVIYSIASPRRVHPRTGEIFNSVLKPIGQTYHNKTVDVMTGEVSPVSIEPATEKEIRDTEAVMGGDDWALWINALFKYNCLAEGVKTVAFTYIGPELTHAVYRNGTIGRAKLHLEKTARELDTQLESALSGQALISVNKALVTQASAAIPVVPLYISLLYKIMKEKNIHEGCIEQMWRLFKERLYSNQNIPTDSEGRIRIDDWEMREDVQAEIKRLWESINTGNVETLSDIAGYREDFYKLFGFGLNGIDYERGVEIEKAIPSITVTPENPE</sequence>
<feature type="chain" id="PRO_1000088451" description="Enoyl-[acyl-carrier-protein] reductase [NADH]">
    <location>
        <begin position="1"/>
        <end position="406"/>
    </location>
</feature>
<feature type="active site" description="Proton donor" evidence="1">
    <location>
        <position position="236"/>
    </location>
</feature>
<feature type="binding site" evidence="1">
    <location>
        <begin position="48"/>
        <end position="53"/>
    </location>
    <ligand>
        <name>NAD(+)</name>
        <dbReference type="ChEBI" id="CHEBI:57540"/>
    </ligand>
</feature>
<feature type="binding site" evidence="1">
    <location>
        <begin position="74"/>
        <end position="75"/>
    </location>
    <ligand>
        <name>NAD(+)</name>
        <dbReference type="ChEBI" id="CHEBI:57540"/>
    </ligand>
</feature>
<feature type="binding site" evidence="1">
    <location>
        <begin position="111"/>
        <end position="112"/>
    </location>
    <ligand>
        <name>NAD(+)</name>
        <dbReference type="ChEBI" id="CHEBI:57540"/>
    </ligand>
</feature>
<feature type="binding site" evidence="1">
    <location>
        <begin position="140"/>
        <end position="141"/>
    </location>
    <ligand>
        <name>NAD(+)</name>
        <dbReference type="ChEBI" id="CHEBI:57540"/>
    </ligand>
</feature>
<feature type="binding site" evidence="1">
    <location>
        <position position="226"/>
    </location>
    <ligand>
        <name>substrate</name>
    </ligand>
</feature>
<feature type="binding site" evidence="1">
    <location>
        <position position="245"/>
    </location>
    <ligand>
        <name>NAD(+)</name>
        <dbReference type="ChEBI" id="CHEBI:57540"/>
    </ligand>
</feature>
<feature type="binding site" evidence="1">
    <location>
        <begin position="275"/>
        <end position="277"/>
    </location>
    <ligand>
        <name>NAD(+)</name>
        <dbReference type="ChEBI" id="CHEBI:57540"/>
    </ligand>
</feature>
<feature type="site" description="Plays an important role in discriminating NADH against NADPH" evidence="1">
    <location>
        <position position="75"/>
    </location>
</feature>
<proteinExistence type="inferred from homology"/>
<name>FABV_COXBN</name>